<protein>
    <recommendedName>
        <fullName evidence="1">Putative competence-damage inducible protein</fullName>
    </recommendedName>
</protein>
<accession>A9VS24</accession>
<gene>
    <name evidence="1" type="primary">cinA</name>
    <name type="ordered locus">BcerKBAB4_3551</name>
</gene>
<evidence type="ECO:0000255" key="1">
    <source>
        <dbReference type="HAMAP-Rule" id="MF_00226"/>
    </source>
</evidence>
<dbReference type="EMBL" id="CP000903">
    <property type="protein sequence ID" value="ABY44724.1"/>
    <property type="molecule type" value="Genomic_DNA"/>
</dbReference>
<dbReference type="RefSeq" id="WP_012261535.1">
    <property type="nucleotide sequence ID" value="NC_010184.1"/>
</dbReference>
<dbReference type="SMR" id="A9VS24"/>
<dbReference type="KEGG" id="bwe:BcerKBAB4_3551"/>
<dbReference type="eggNOG" id="COG1058">
    <property type="taxonomic scope" value="Bacteria"/>
</dbReference>
<dbReference type="eggNOG" id="COG1546">
    <property type="taxonomic scope" value="Bacteria"/>
</dbReference>
<dbReference type="HOGENOM" id="CLU_030805_9_3_9"/>
<dbReference type="Proteomes" id="UP000002154">
    <property type="component" value="Chromosome"/>
</dbReference>
<dbReference type="CDD" id="cd00885">
    <property type="entry name" value="cinA"/>
    <property type="match status" value="1"/>
</dbReference>
<dbReference type="Gene3D" id="3.30.70.2860">
    <property type="match status" value="1"/>
</dbReference>
<dbReference type="Gene3D" id="3.90.950.20">
    <property type="entry name" value="CinA-like"/>
    <property type="match status" value="1"/>
</dbReference>
<dbReference type="Gene3D" id="3.40.980.10">
    <property type="entry name" value="MoaB/Mog-like domain"/>
    <property type="match status" value="1"/>
</dbReference>
<dbReference type="HAMAP" id="MF_00226_B">
    <property type="entry name" value="CinA_B"/>
    <property type="match status" value="1"/>
</dbReference>
<dbReference type="InterPro" id="IPR050101">
    <property type="entry name" value="CinA"/>
</dbReference>
<dbReference type="InterPro" id="IPR036653">
    <property type="entry name" value="CinA-like_C"/>
</dbReference>
<dbReference type="InterPro" id="IPR008136">
    <property type="entry name" value="CinA_C"/>
</dbReference>
<dbReference type="InterPro" id="IPR041424">
    <property type="entry name" value="CinA_KH"/>
</dbReference>
<dbReference type="InterPro" id="IPR008135">
    <property type="entry name" value="Competence-induced_CinA"/>
</dbReference>
<dbReference type="InterPro" id="IPR036425">
    <property type="entry name" value="MoaB/Mog-like_dom_sf"/>
</dbReference>
<dbReference type="InterPro" id="IPR001453">
    <property type="entry name" value="MoaB/Mog_dom"/>
</dbReference>
<dbReference type="NCBIfam" id="TIGR00200">
    <property type="entry name" value="cinA_nterm"/>
    <property type="match status" value="1"/>
</dbReference>
<dbReference type="NCBIfam" id="TIGR00177">
    <property type="entry name" value="molyb_syn"/>
    <property type="match status" value="1"/>
</dbReference>
<dbReference type="NCBIfam" id="TIGR00199">
    <property type="entry name" value="PncC_domain"/>
    <property type="match status" value="1"/>
</dbReference>
<dbReference type="NCBIfam" id="NF001813">
    <property type="entry name" value="PRK00549.1"/>
    <property type="match status" value="1"/>
</dbReference>
<dbReference type="PANTHER" id="PTHR13939">
    <property type="entry name" value="NICOTINAMIDE-NUCLEOTIDE AMIDOHYDROLASE PNCC"/>
    <property type="match status" value="1"/>
</dbReference>
<dbReference type="PANTHER" id="PTHR13939:SF0">
    <property type="entry name" value="NMN AMIDOHYDROLASE-LIKE PROTEIN YFAY"/>
    <property type="match status" value="1"/>
</dbReference>
<dbReference type="Pfam" id="PF02464">
    <property type="entry name" value="CinA"/>
    <property type="match status" value="1"/>
</dbReference>
<dbReference type="Pfam" id="PF18146">
    <property type="entry name" value="CinA_KH"/>
    <property type="match status" value="1"/>
</dbReference>
<dbReference type="Pfam" id="PF00994">
    <property type="entry name" value="MoCF_biosynth"/>
    <property type="match status" value="1"/>
</dbReference>
<dbReference type="PIRSF" id="PIRSF006728">
    <property type="entry name" value="CinA"/>
    <property type="match status" value="1"/>
</dbReference>
<dbReference type="SMART" id="SM00852">
    <property type="entry name" value="MoCF_biosynth"/>
    <property type="match status" value="1"/>
</dbReference>
<dbReference type="SUPFAM" id="SSF142433">
    <property type="entry name" value="CinA-like"/>
    <property type="match status" value="1"/>
</dbReference>
<dbReference type="SUPFAM" id="SSF53218">
    <property type="entry name" value="Molybdenum cofactor biosynthesis proteins"/>
    <property type="match status" value="1"/>
</dbReference>
<name>CINA_BACMK</name>
<proteinExistence type="inferred from homology"/>
<organism>
    <name type="scientific">Bacillus mycoides (strain KBAB4)</name>
    <name type="common">Bacillus weihenstephanensis</name>
    <dbReference type="NCBI Taxonomy" id="315730"/>
    <lineage>
        <taxon>Bacteria</taxon>
        <taxon>Bacillati</taxon>
        <taxon>Bacillota</taxon>
        <taxon>Bacilli</taxon>
        <taxon>Bacillales</taxon>
        <taxon>Bacillaceae</taxon>
        <taxon>Bacillus</taxon>
        <taxon>Bacillus cereus group</taxon>
    </lineage>
</organism>
<sequence>MNAEIIAVGTELLLGQIANTNAQFLSEKLASIGINVYYHTVVGDNNKRLQKAIELAEERADMLIFTGGLGPTKDDLTKETIASTLDEELVYDEKALTSISDYFKRTGREFTENNKKQALVLNGSTVFANDHGMAPGMGLNTNGKVYILLPGPPKEMKPMYISYVEPFLCKFTTGENIYSRVLRFFGIGESQLEVKVQDLIDGQTNPTIAPLANDGEVTLRLTAKHHDADEAEKLIQHVEDLILERVGEFFYGYDQDFLHYKAIRLLKEKGLTLACAESLTGGLFGNQVTENAGVSSVFKGGVICYQNDVKQQILHVPEEVLRTDGAVSKQCARYLAENVKKLLKADIGISFTGVAGPDASEHKEPGTVFIGLVIKDEPAVVFSLNLSGSRQQIRERSTKYGFYHLFKKLEEI</sequence>
<comment type="similarity">
    <text evidence="1">Belongs to the CinA family.</text>
</comment>
<reference key="1">
    <citation type="journal article" date="2008" name="Chem. Biol. Interact.">
        <title>Extending the Bacillus cereus group genomics to putative food-borne pathogens of different toxicity.</title>
        <authorList>
            <person name="Lapidus A."/>
            <person name="Goltsman E."/>
            <person name="Auger S."/>
            <person name="Galleron N."/>
            <person name="Segurens B."/>
            <person name="Dossat C."/>
            <person name="Land M.L."/>
            <person name="Broussolle V."/>
            <person name="Brillard J."/>
            <person name="Guinebretiere M.-H."/>
            <person name="Sanchis V."/>
            <person name="Nguen-the C."/>
            <person name="Lereclus D."/>
            <person name="Richardson P."/>
            <person name="Wincker P."/>
            <person name="Weissenbach J."/>
            <person name="Ehrlich S.D."/>
            <person name="Sorokin A."/>
        </authorList>
    </citation>
    <scope>NUCLEOTIDE SEQUENCE [LARGE SCALE GENOMIC DNA]</scope>
    <source>
        <strain>KBAB4</strain>
    </source>
</reference>
<feature type="chain" id="PRO_1000100306" description="Putative competence-damage inducible protein">
    <location>
        <begin position="1"/>
        <end position="412"/>
    </location>
</feature>